<organism>
    <name type="scientific">Idiomarina loihiensis (strain ATCC BAA-735 / DSM 15497 / L2-TR)</name>
    <dbReference type="NCBI Taxonomy" id="283942"/>
    <lineage>
        <taxon>Bacteria</taxon>
        <taxon>Pseudomonadati</taxon>
        <taxon>Pseudomonadota</taxon>
        <taxon>Gammaproteobacteria</taxon>
        <taxon>Alteromonadales</taxon>
        <taxon>Idiomarinaceae</taxon>
        <taxon>Idiomarina</taxon>
    </lineage>
</organism>
<proteinExistence type="inferred from homology"/>
<feature type="chain" id="PRO_0000258689" description="Large ribosomal subunit protein bL35">
    <location>
        <begin position="1"/>
        <end position="65"/>
    </location>
</feature>
<feature type="region of interest" description="Disordered" evidence="2">
    <location>
        <begin position="1"/>
        <end position="26"/>
    </location>
</feature>
<dbReference type="EMBL" id="AE017340">
    <property type="protein sequence ID" value="AAV82237.1"/>
    <property type="molecule type" value="Genomic_DNA"/>
</dbReference>
<dbReference type="RefSeq" id="WP_011234643.1">
    <property type="nucleotide sequence ID" value="NC_006512.1"/>
</dbReference>
<dbReference type="SMR" id="Q5QYN6"/>
<dbReference type="STRING" id="283942.IL1397"/>
<dbReference type="GeneID" id="41336573"/>
<dbReference type="KEGG" id="ilo:IL1397"/>
<dbReference type="eggNOG" id="COG0291">
    <property type="taxonomic scope" value="Bacteria"/>
</dbReference>
<dbReference type="HOGENOM" id="CLU_169643_1_1_6"/>
<dbReference type="OrthoDB" id="47476at2"/>
<dbReference type="Proteomes" id="UP000001171">
    <property type="component" value="Chromosome"/>
</dbReference>
<dbReference type="GO" id="GO:0022625">
    <property type="term" value="C:cytosolic large ribosomal subunit"/>
    <property type="evidence" value="ECO:0007669"/>
    <property type="project" value="TreeGrafter"/>
</dbReference>
<dbReference type="GO" id="GO:0003735">
    <property type="term" value="F:structural constituent of ribosome"/>
    <property type="evidence" value="ECO:0007669"/>
    <property type="project" value="InterPro"/>
</dbReference>
<dbReference type="GO" id="GO:0006412">
    <property type="term" value="P:translation"/>
    <property type="evidence" value="ECO:0007669"/>
    <property type="project" value="UniProtKB-UniRule"/>
</dbReference>
<dbReference type="FunFam" id="4.10.410.60:FF:000001">
    <property type="entry name" value="50S ribosomal protein L35"/>
    <property type="match status" value="1"/>
</dbReference>
<dbReference type="Gene3D" id="4.10.410.60">
    <property type="match status" value="1"/>
</dbReference>
<dbReference type="HAMAP" id="MF_00514">
    <property type="entry name" value="Ribosomal_bL35"/>
    <property type="match status" value="1"/>
</dbReference>
<dbReference type="InterPro" id="IPR001706">
    <property type="entry name" value="Ribosomal_bL35"/>
</dbReference>
<dbReference type="InterPro" id="IPR021137">
    <property type="entry name" value="Ribosomal_bL35-like"/>
</dbReference>
<dbReference type="InterPro" id="IPR018265">
    <property type="entry name" value="Ribosomal_bL35_CS"/>
</dbReference>
<dbReference type="InterPro" id="IPR037229">
    <property type="entry name" value="Ribosomal_bL35_sf"/>
</dbReference>
<dbReference type="NCBIfam" id="TIGR00001">
    <property type="entry name" value="rpmI_bact"/>
    <property type="match status" value="1"/>
</dbReference>
<dbReference type="PANTHER" id="PTHR33343">
    <property type="entry name" value="54S RIBOSOMAL PROTEIN BL35M"/>
    <property type="match status" value="1"/>
</dbReference>
<dbReference type="PANTHER" id="PTHR33343:SF1">
    <property type="entry name" value="LARGE RIBOSOMAL SUBUNIT PROTEIN BL35M"/>
    <property type="match status" value="1"/>
</dbReference>
<dbReference type="Pfam" id="PF01632">
    <property type="entry name" value="Ribosomal_L35p"/>
    <property type="match status" value="1"/>
</dbReference>
<dbReference type="PRINTS" id="PR00064">
    <property type="entry name" value="RIBOSOMALL35"/>
</dbReference>
<dbReference type="SUPFAM" id="SSF143034">
    <property type="entry name" value="L35p-like"/>
    <property type="match status" value="1"/>
</dbReference>
<dbReference type="PROSITE" id="PS00936">
    <property type="entry name" value="RIBOSOMAL_L35"/>
    <property type="match status" value="1"/>
</dbReference>
<accession>Q5QYN6</accession>
<name>RL35_IDILO</name>
<keyword id="KW-1185">Reference proteome</keyword>
<keyword id="KW-0687">Ribonucleoprotein</keyword>
<keyword id="KW-0689">Ribosomal protein</keyword>
<sequence length="65" mass="7479">MPKMKSNKGASKRFKKTASGGFKCKQSHLRHILTKKSPKRKRQLRAKSMVHEADVKLVVRMLPYA</sequence>
<comment type="similarity">
    <text evidence="1">Belongs to the bacterial ribosomal protein bL35 family.</text>
</comment>
<reference key="1">
    <citation type="journal article" date="2004" name="Proc. Natl. Acad. Sci. U.S.A.">
        <title>Genome sequence of the deep-sea gamma-proteobacterium Idiomarina loihiensis reveals amino acid fermentation as a source of carbon and energy.</title>
        <authorList>
            <person name="Hou S."/>
            <person name="Saw J.H."/>
            <person name="Lee K.S."/>
            <person name="Freitas T.A."/>
            <person name="Belisle C."/>
            <person name="Kawarabayasi Y."/>
            <person name="Donachie S.P."/>
            <person name="Pikina A."/>
            <person name="Galperin M.Y."/>
            <person name="Koonin E.V."/>
            <person name="Makarova K.S."/>
            <person name="Omelchenko M.V."/>
            <person name="Sorokin A."/>
            <person name="Wolf Y.I."/>
            <person name="Li Q.X."/>
            <person name="Keum Y.S."/>
            <person name="Campbell S."/>
            <person name="Denery J."/>
            <person name="Aizawa S."/>
            <person name="Shibata S."/>
            <person name="Malahoff A."/>
            <person name="Alam M."/>
        </authorList>
    </citation>
    <scope>NUCLEOTIDE SEQUENCE [LARGE SCALE GENOMIC DNA]</scope>
    <source>
        <strain>ATCC BAA-735 / DSM 15497 / L2-TR</strain>
    </source>
</reference>
<gene>
    <name evidence="1" type="primary">rpmI</name>
    <name type="ordered locus">IL1397</name>
</gene>
<evidence type="ECO:0000255" key="1">
    <source>
        <dbReference type="HAMAP-Rule" id="MF_00514"/>
    </source>
</evidence>
<evidence type="ECO:0000256" key="2">
    <source>
        <dbReference type="SAM" id="MobiDB-lite"/>
    </source>
</evidence>
<evidence type="ECO:0000305" key="3"/>
<protein>
    <recommendedName>
        <fullName evidence="1">Large ribosomal subunit protein bL35</fullName>
    </recommendedName>
    <alternativeName>
        <fullName evidence="3">50S ribosomal protein L35</fullName>
    </alternativeName>
</protein>